<proteinExistence type="evidence at protein level"/>
<comment type="function">
    <text evidence="5">Seed storage protein. Accumulates during seed development and is hydrolyzed after germination to provide a carbon and nitrogen source for the developing seedling.</text>
</comment>
<comment type="subunit">
    <text evidence="9">Component of globulins complexes which accumulate in seeds.</text>
</comment>
<comment type="developmental stage">
    <text evidence="5">Increased expression during seed filling, with a maximum between 33 and 38 days after anthesis.</text>
</comment>
<comment type="allergen">
    <text evidence="4">Causes an allergic reaction in human. Lup an 1 is the major lupin allergen.</text>
</comment>
<comment type="miscellaneous">
    <text evidence="10">The variability of the residues taking part of IgE-binding epitopes might be responsible of the difference in cross-reactivity among legumes.</text>
</comment>
<comment type="similarity">
    <text evidence="8">Belongs to the 7S seed storage protein family.</text>
</comment>
<gene>
    <name evidence="7" type="primary">BETA1</name>
</gene>
<protein>
    <recommendedName>
        <fullName evidence="7">Conglutin beta 1</fullName>
    </recommendedName>
    <allergenName evidence="6">Lup an 1</allergenName>
</protein>
<accession>F5B8V9</accession>
<keyword id="KW-0020">Allergen</keyword>
<keyword id="KW-0325">Glycoprotein</keyword>
<keyword id="KW-0708">Seed storage protein</keyword>
<keyword id="KW-0732">Signal</keyword>
<keyword id="KW-0758">Storage protein</keyword>
<dbReference type="EMBL" id="HQ670409">
    <property type="protein sequence ID" value="AEB33712.1"/>
    <property type="molecule type" value="mRNA"/>
</dbReference>
<dbReference type="RefSeq" id="XP_019432143.1">
    <property type="nucleotide sequence ID" value="XM_019576598.1"/>
</dbReference>
<dbReference type="SMR" id="F5B8V9"/>
<dbReference type="Allergome" id="4015">
    <property type="allergen name" value="Lup an 1"/>
</dbReference>
<dbReference type="GlyCosmos" id="F5B8V9">
    <property type="glycosylation" value="2 sites, No reported glycans"/>
</dbReference>
<dbReference type="EnsemblPlants" id="OIW21011">
    <property type="protein sequence ID" value="OIW21011"/>
    <property type="gene ID" value="TanjilG_27356"/>
</dbReference>
<dbReference type="GeneID" id="109339187"/>
<dbReference type="Gramene" id="OIW21011">
    <property type="protein sequence ID" value="OIW21011"/>
    <property type="gene ID" value="TanjilG_27356"/>
</dbReference>
<dbReference type="KEGG" id="lang:109339187"/>
<dbReference type="OrthoDB" id="1425232at2759"/>
<dbReference type="GO" id="GO:0045735">
    <property type="term" value="F:nutrient reservoir activity"/>
    <property type="evidence" value="ECO:0007669"/>
    <property type="project" value="UniProtKB-KW"/>
</dbReference>
<dbReference type="CDD" id="cd02245">
    <property type="entry name" value="cupin_7S_vicilin-like_C"/>
    <property type="match status" value="1"/>
</dbReference>
<dbReference type="CDD" id="cd02244">
    <property type="entry name" value="cupin_7S_vicilin-like_N"/>
    <property type="match status" value="1"/>
</dbReference>
<dbReference type="Gene3D" id="2.60.120.10">
    <property type="entry name" value="Jelly Rolls"/>
    <property type="match status" value="2"/>
</dbReference>
<dbReference type="InterPro" id="IPR006045">
    <property type="entry name" value="Cupin_1"/>
</dbReference>
<dbReference type="InterPro" id="IPR014710">
    <property type="entry name" value="RmlC-like_jellyroll"/>
</dbReference>
<dbReference type="InterPro" id="IPR011051">
    <property type="entry name" value="RmlC_Cupin_sf"/>
</dbReference>
<dbReference type="InterPro" id="IPR050253">
    <property type="entry name" value="Seed_Storage-Functional"/>
</dbReference>
<dbReference type="PANTHER" id="PTHR31189">
    <property type="entry name" value="OS03G0336100 PROTEIN-RELATED"/>
    <property type="match status" value="1"/>
</dbReference>
<dbReference type="PANTHER" id="PTHR31189:SF41">
    <property type="entry name" value="VICILIN C72"/>
    <property type="match status" value="1"/>
</dbReference>
<dbReference type="Pfam" id="PF00190">
    <property type="entry name" value="Cupin_1"/>
    <property type="match status" value="2"/>
</dbReference>
<dbReference type="SMART" id="SM00835">
    <property type="entry name" value="Cupin_1"/>
    <property type="match status" value="2"/>
</dbReference>
<dbReference type="SUPFAM" id="SSF51182">
    <property type="entry name" value="RmlC-like cupins"/>
    <property type="match status" value="1"/>
</dbReference>
<organism>
    <name type="scientific">Lupinus angustifolius</name>
    <name type="common">Narrow-leaved blue lupine</name>
    <dbReference type="NCBI Taxonomy" id="3871"/>
    <lineage>
        <taxon>Eukaryota</taxon>
        <taxon>Viridiplantae</taxon>
        <taxon>Streptophyta</taxon>
        <taxon>Embryophyta</taxon>
        <taxon>Tracheophyta</taxon>
        <taxon>Spermatophyta</taxon>
        <taxon>Magnoliopsida</taxon>
        <taxon>eudicotyledons</taxon>
        <taxon>Gunneridae</taxon>
        <taxon>Pentapetalae</taxon>
        <taxon>rosids</taxon>
        <taxon>fabids</taxon>
        <taxon>Fabales</taxon>
        <taxon>Fabaceae</taxon>
        <taxon>Papilionoideae</taxon>
        <taxon>50 kb inversion clade</taxon>
        <taxon>genistoids sensu lato</taxon>
        <taxon>core genistoids</taxon>
        <taxon>Genisteae</taxon>
        <taxon>Lupinus</taxon>
    </lineage>
</organism>
<feature type="signal peptide" evidence="1">
    <location>
        <begin position="1"/>
        <end position="30"/>
    </location>
</feature>
<feature type="chain" id="PRO_5003326254" description="Conglutin beta 1" evidence="1">
    <location>
        <begin position="31"/>
        <end position="611"/>
    </location>
</feature>
<feature type="domain" description="Cupin type-1 1" evidence="1">
    <location>
        <begin position="186"/>
        <end position="344"/>
    </location>
</feature>
<feature type="domain" description="Cupin type-1 2" evidence="1">
    <location>
        <begin position="403"/>
        <end position="569"/>
    </location>
</feature>
<feature type="region of interest" description="Disordered" evidence="3">
    <location>
        <begin position="32"/>
        <end position="194"/>
    </location>
</feature>
<feature type="region of interest" description="Disordered" evidence="3">
    <location>
        <begin position="384"/>
        <end position="407"/>
    </location>
</feature>
<feature type="region of interest" description="Disordered" evidence="3">
    <location>
        <begin position="476"/>
        <end position="495"/>
    </location>
</feature>
<feature type="region of interest" description="Disordered" evidence="3">
    <location>
        <begin position="580"/>
        <end position="600"/>
    </location>
</feature>
<feature type="compositionally biased region" description="Basic and acidic residues" evidence="3">
    <location>
        <begin position="32"/>
        <end position="82"/>
    </location>
</feature>
<feature type="compositionally biased region" description="Basic and acidic residues" evidence="3">
    <location>
        <begin position="130"/>
        <end position="141"/>
    </location>
</feature>
<feature type="compositionally biased region" description="Low complexity" evidence="3">
    <location>
        <begin position="142"/>
        <end position="151"/>
    </location>
</feature>
<feature type="compositionally biased region" description="Basic and acidic residues" evidence="3">
    <location>
        <begin position="152"/>
        <end position="181"/>
    </location>
</feature>
<feature type="compositionally biased region" description="Low complexity" evidence="3">
    <location>
        <begin position="390"/>
        <end position="402"/>
    </location>
</feature>
<feature type="compositionally biased region" description="Acidic residues" evidence="3">
    <location>
        <begin position="483"/>
        <end position="492"/>
    </location>
</feature>
<feature type="compositionally biased region" description="Low complexity" evidence="3">
    <location>
        <begin position="580"/>
        <end position="589"/>
    </location>
</feature>
<feature type="glycosylation site" description="N-linked (GlcNAc...) asparagine" evidence="2">
    <location>
        <position position="434"/>
    </location>
</feature>
<feature type="glycosylation site" description="N-linked (GlcNAc...) asparagine" evidence="2">
    <location>
        <position position="519"/>
    </location>
</feature>
<evidence type="ECO:0000255" key="1"/>
<evidence type="ECO:0000255" key="2">
    <source>
        <dbReference type="PROSITE-ProRule" id="PRU00498"/>
    </source>
</evidence>
<evidence type="ECO:0000256" key="3">
    <source>
        <dbReference type="SAM" id="MobiDB-lite"/>
    </source>
</evidence>
<evidence type="ECO:0000269" key="4">
    <source>
    </source>
</evidence>
<evidence type="ECO:0000269" key="5">
    <source>
    </source>
</evidence>
<evidence type="ECO:0000303" key="6">
    <source>
    </source>
</evidence>
<evidence type="ECO:0000303" key="7">
    <source>
    </source>
</evidence>
<evidence type="ECO:0000305" key="8"/>
<evidence type="ECO:0000305" key="9">
    <source>
    </source>
</evidence>
<evidence type="ECO:0000305" key="10">
    <source ref="4"/>
</evidence>
<sequence>MAKMRVRLPMLILLLGVVFLLAASIGIAYGEKDFTKNPPKEREEEEHEPRQQPRPRQQEEQEREHRREEKHDGEPSRGRSQSEESQEEEHERRREHHREREQEQQPRPQRRQEEEEEEEEWQPRRQRPQSRREEREEREQEQGSSSGSQRGSGDERRQHRERRVHREEREQEQDSRSDSRRQRNPYHFSSNRFQTYYRNRNGQIRVLERFNQRTNRLENLQNYRIIEFQSKPNTLILPKHSDADFILVVLNGRATITIVNPDKRQVYNLEQGDALRLPAGTTSYILNPDDNQNLRVAKLAIPINNPGKLYDFYPSTTKDQQSYFSGFSKNTLEATFNTRYEEIERVLLGDDELQENEKQRRGQEQSHQDEGVIVRVSKKQIQELRKHAQSSSGEGKPSESGPFNLRSNKPIYSNKFGNFYEITPDINPQFQDLNISLTFTEINEGALLLPHYNSKAIFIVVVDEGEGNYELVGIRDQQRQQDEQEEEYEQGEEEVRRYSDKLSKGDVFIIPAGHPLSINASSNLRLLGFGINANENQRNFLAGSEDNVIKQLDREVKELTFPGSIEDVERLIKNQQQSYFANAQPQQQQQREKEGRRGRRGPISSILNALY</sequence>
<name>CONB1_LUPAN</name>
<reference key="1">
    <citation type="journal article" date="2011" name="BMC Plant Biol.">
        <title>Identification and characterisation of seed storage protein transcripts from Lupinus angustifolius.</title>
        <authorList>
            <person name="Foley R.C."/>
            <person name="Gao L.-L."/>
            <person name="Spriggs A."/>
            <person name="Soo L.Y.C."/>
            <person name="Goggin D.E."/>
            <person name="Smith P.M.C."/>
            <person name="Atkins C.A."/>
            <person name="Singh K.B."/>
        </authorList>
    </citation>
    <scope>NUCLEOTIDE SEQUENCE [MRNA]</scope>
    <scope>FUNCTION</scope>
    <scope>DEVELOPMENTAL STAGE</scope>
    <source>
        <strain>cv. Tanjil</strain>
        <tissue>Seed</tissue>
    </source>
</reference>
<reference key="2">
    <citation type="journal article" date="2008" name="J. Agric. Food Chem.">
        <title>Proteomic analysis of lupin seed proteins to identify conglutin Beta as an allergen, Lup an 1.</title>
        <authorList>
            <person name="Goggin D.E."/>
            <person name="Mir G."/>
            <person name="Smith W.B."/>
            <person name="Stuckey M."/>
            <person name="Smith P.M."/>
        </authorList>
    </citation>
    <scope>ALLERGEN</scope>
</reference>
<reference key="3">
    <citation type="journal article" date="2012" name="J. Agric. Food Chem.">
        <title>Release of flavonoids from lupin globulin proteins during digestion in a model system.</title>
        <authorList>
            <person name="Czubinski J."/>
            <person name="Dwiecki K."/>
            <person name="Siger A."/>
            <person name="Kachlicki P."/>
            <person name="Neunert G."/>
            <person name="Lampart-Szczapa E."/>
            <person name="Nogala-Kalucka M."/>
        </authorList>
    </citation>
    <scope>SUBUNIT</scope>
    <source>
        <strain>cv. Zeus</strain>
    </source>
</reference>
<reference key="4">
    <citation type="book" date="2015" name="Bioinformatics and Biomedical Engineering, LNCS 9043">
        <title>Lupin allergy: Uncovering structural features and epitopes of b-conglutin proteins in Lupinus angustifolius L. with a focus on cross-allergenic reactivity to peanut and other legumes.</title>
        <editorList>
            <person name="Ortuno F."/>
            <person name="Rojas I."/>
        </editorList>
        <authorList>
            <person name="Jimenez-Lopez J.C."/>
            <person name="Lima-Cabello E."/>
            <person name="Melser S."/>
            <person name="Foley R.C."/>
            <person name="Singh K.B."/>
        </authorList>
    </citation>
    <scope>3D-STRUCTURE MODELING</scope>
</reference>